<gene>
    <name evidence="1" type="primary">coaD</name>
    <name type="ordered locus">Bsph_1414</name>
</gene>
<organism>
    <name type="scientific">Lysinibacillus sphaericus (strain C3-41)</name>
    <dbReference type="NCBI Taxonomy" id="444177"/>
    <lineage>
        <taxon>Bacteria</taxon>
        <taxon>Bacillati</taxon>
        <taxon>Bacillota</taxon>
        <taxon>Bacilli</taxon>
        <taxon>Bacillales</taxon>
        <taxon>Bacillaceae</taxon>
        <taxon>Lysinibacillus</taxon>
    </lineage>
</organism>
<feature type="chain" id="PRO_1000096812" description="Phosphopantetheine adenylyltransferase">
    <location>
        <begin position="1"/>
        <end position="163"/>
    </location>
</feature>
<feature type="binding site" evidence="1">
    <location>
        <begin position="11"/>
        <end position="12"/>
    </location>
    <ligand>
        <name>ATP</name>
        <dbReference type="ChEBI" id="CHEBI:30616"/>
    </ligand>
</feature>
<feature type="binding site" evidence="1">
    <location>
        <position position="11"/>
    </location>
    <ligand>
        <name>substrate</name>
    </ligand>
</feature>
<feature type="binding site" evidence="1">
    <location>
        <position position="19"/>
    </location>
    <ligand>
        <name>ATP</name>
        <dbReference type="ChEBI" id="CHEBI:30616"/>
    </ligand>
</feature>
<feature type="binding site" evidence="1">
    <location>
        <position position="43"/>
    </location>
    <ligand>
        <name>substrate</name>
    </ligand>
</feature>
<feature type="binding site" evidence="1">
    <location>
        <position position="75"/>
    </location>
    <ligand>
        <name>substrate</name>
    </ligand>
</feature>
<feature type="binding site" evidence="1">
    <location>
        <position position="89"/>
    </location>
    <ligand>
        <name>substrate</name>
    </ligand>
</feature>
<feature type="binding site" evidence="1">
    <location>
        <begin position="90"/>
        <end position="92"/>
    </location>
    <ligand>
        <name>ATP</name>
        <dbReference type="ChEBI" id="CHEBI:30616"/>
    </ligand>
</feature>
<feature type="binding site" evidence="1">
    <location>
        <position position="100"/>
    </location>
    <ligand>
        <name>ATP</name>
        <dbReference type="ChEBI" id="CHEBI:30616"/>
    </ligand>
</feature>
<feature type="binding site" evidence="1">
    <location>
        <begin position="125"/>
        <end position="131"/>
    </location>
    <ligand>
        <name>ATP</name>
        <dbReference type="ChEBI" id="CHEBI:30616"/>
    </ligand>
</feature>
<feature type="site" description="Transition state stabilizer" evidence="1">
    <location>
        <position position="19"/>
    </location>
</feature>
<accession>B1HPW8</accession>
<evidence type="ECO:0000255" key="1">
    <source>
        <dbReference type="HAMAP-Rule" id="MF_00151"/>
    </source>
</evidence>
<dbReference type="EC" id="2.7.7.3" evidence="1"/>
<dbReference type="EMBL" id="CP000817">
    <property type="protein sequence ID" value="ACA39020.1"/>
    <property type="molecule type" value="Genomic_DNA"/>
</dbReference>
<dbReference type="RefSeq" id="WP_012293141.1">
    <property type="nucleotide sequence ID" value="NC_010382.1"/>
</dbReference>
<dbReference type="SMR" id="B1HPW8"/>
<dbReference type="EnsemblBacteria" id="ACA39020">
    <property type="protein sequence ID" value="ACA39020"/>
    <property type="gene ID" value="Bsph_1414"/>
</dbReference>
<dbReference type="KEGG" id="lsp:Bsph_1414"/>
<dbReference type="HOGENOM" id="CLU_100149_0_1_9"/>
<dbReference type="UniPathway" id="UPA00241">
    <property type="reaction ID" value="UER00355"/>
</dbReference>
<dbReference type="Proteomes" id="UP000002164">
    <property type="component" value="Chromosome"/>
</dbReference>
<dbReference type="GO" id="GO:0005737">
    <property type="term" value="C:cytoplasm"/>
    <property type="evidence" value="ECO:0007669"/>
    <property type="project" value="UniProtKB-SubCell"/>
</dbReference>
<dbReference type="GO" id="GO:0005524">
    <property type="term" value="F:ATP binding"/>
    <property type="evidence" value="ECO:0007669"/>
    <property type="project" value="UniProtKB-KW"/>
</dbReference>
<dbReference type="GO" id="GO:0004595">
    <property type="term" value="F:pantetheine-phosphate adenylyltransferase activity"/>
    <property type="evidence" value="ECO:0007669"/>
    <property type="project" value="UniProtKB-UniRule"/>
</dbReference>
<dbReference type="GO" id="GO:0015937">
    <property type="term" value="P:coenzyme A biosynthetic process"/>
    <property type="evidence" value="ECO:0007669"/>
    <property type="project" value="UniProtKB-UniRule"/>
</dbReference>
<dbReference type="CDD" id="cd02163">
    <property type="entry name" value="PPAT"/>
    <property type="match status" value="1"/>
</dbReference>
<dbReference type="FunFam" id="3.40.50.620:FF:000012">
    <property type="entry name" value="Phosphopantetheine adenylyltransferase"/>
    <property type="match status" value="1"/>
</dbReference>
<dbReference type="Gene3D" id="3.40.50.620">
    <property type="entry name" value="HUPs"/>
    <property type="match status" value="1"/>
</dbReference>
<dbReference type="HAMAP" id="MF_00151">
    <property type="entry name" value="PPAT_bact"/>
    <property type="match status" value="1"/>
</dbReference>
<dbReference type="InterPro" id="IPR004821">
    <property type="entry name" value="Cyt_trans-like"/>
</dbReference>
<dbReference type="InterPro" id="IPR001980">
    <property type="entry name" value="PPAT"/>
</dbReference>
<dbReference type="InterPro" id="IPR014729">
    <property type="entry name" value="Rossmann-like_a/b/a_fold"/>
</dbReference>
<dbReference type="NCBIfam" id="TIGR01510">
    <property type="entry name" value="coaD_prev_kdtB"/>
    <property type="match status" value="1"/>
</dbReference>
<dbReference type="NCBIfam" id="TIGR00125">
    <property type="entry name" value="cyt_tran_rel"/>
    <property type="match status" value="1"/>
</dbReference>
<dbReference type="PANTHER" id="PTHR21342">
    <property type="entry name" value="PHOSPHOPANTETHEINE ADENYLYLTRANSFERASE"/>
    <property type="match status" value="1"/>
</dbReference>
<dbReference type="PANTHER" id="PTHR21342:SF1">
    <property type="entry name" value="PHOSPHOPANTETHEINE ADENYLYLTRANSFERASE"/>
    <property type="match status" value="1"/>
</dbReference>
<dbReference type="Pfam" id="PF01467">
    <property type="entry name" value="CTP_transf_like"/>
    <property type="match status" value="1"/>
</dbReference>
<dbReference type="PRINTS" id="PR01020">
    <property type="entry name" value="LPSBIOSNTHSS"/>
</dbReference>
<dbReference type="SUPFAM" id="SSF52374">
    <property type="entry name" value="Nucleotidylyl transferase"/>
    <property type="match status" value="1"/>
</dbReference>
<keyword id="KW-0067">ATP-binding</keyword>
<keyword id="KW-0173">Coenzyme A biosynthesis</keyword>
<keyword id="KW-0963">Cytoplasm</keyword>
<keyword id="KW-0460">Magnesium</keyword>
<keyword id="KW-0547">Nucleotide-binding</keyword>
<keyword id="KW-0548">Nucleotidyltransferase</keyword>
<keyword id="KW-0808">Transferase</keyword>
<reference key="1">
    <citation type="journal article" date="2008" name="J. Bacteriol.">
        <title>Complete genome sequence of the mosquitocidal bacterium Bacillus sphaericus C3-41 and comparison with those of closely related Bacillus species.</title>
        <authorList>
            <person name="Hu X."/>
            <person name="Fan W."/>
            <person name="Han B."/>
            <person name="Liu H."/>
            <person name="Zheng D."/>
            <person name="Li Q."/>
            <person name="Dong W."/>
            <person name="Yan J."/>
            <person name="Gao M."/>
            <person name="Berry C."/>
            <person name="Yuan Z."/>
        </authorList>
    </citation>
    <scope>NUCLEOTIDE SEQUENCE [LARGE SCALE GENOMIC DNA]</scope>
    <source>
        <strain>C3-41</strain>
    </source>
</reference>
<name>COAD_LYSSC</name>
<proteinExistence type="inferred from homology"/>
<sequence length="163" mass="18248">MSEKIAVVPGSFDPVTFGHLDIIKRAADVFDIVYVAVLNNSAKNPLFSVEERMALMAEVTKALPNVRIESSSGLLIDYAKEKKAKAIVRGLRAVSDFEYEMQITSMNRFLDETIETFFIMTKNQYSFLSSSIVKEVAKYGSDVNELVPDCVVQALKEKYGFSQ</sequence>
<comment type="function">
    <text evidence="1">Reversibly transfers an adenylyl group from ATP to 4'-phosphopantetheine, yielding dephospho-CoA (dPCoA) and pyrophosphate.</text>
</comment>
<comment type="catalytic activity">
    <reaction evidence="1">
        <text>(R)-4'-phosphopantetheine + ATP + H(+) = 3'-dephospho-CoA + diphosphate</text>
        <dbReference type="Rhea" id="RHEA:19801"/>
        <dbReference type="ChEBI" id="CHEBI:15378"/>
        <dbReference type="ChEBI" id="CHEBI:30616"/>
        <dbReference type="ChEBI" id="CHEBI:33019"/>
        <dbReference type="ChEBI" id="CHEBI:57328"/>
        <dbReference type="ChEBI" id="CHEBI:61723"/>
        <dbReference type="EC" id="2.7.7.3"/>
    </reaction>
</comment>
<comment type="cofactor">
    <cofactor evidence="1">
        <name>Mg(2+)</name>
        <dbReference type="ChEBI" id="CHEBI:18420"/>
    </cofactor>
</comment>
<comment type="pathway">
    <text evidence="1">Cofactor biosynthesis; coenzyme A biosynthesis; CoA from (R)-pantothenate: step 4/5.</text>
</comment>
<comment type="subunit">
    <text evidence="1">Homohexamer.</text>
</comment>
<comment type="subcellular location">
    <subcellularLocation>
        <location evidence="1">Cytoplasm</location>
    </subcellularLocation>
</comment>
<comment type="similarity">
    <text evidence="1">Belongs to the bacterial CoaD family.</text>
</comment>
<protein>
    <recommendedName>
        <fullName evidence="1">Phosphopantetheine adenylyltransferase</fullName>
        <ecNumber evidence="1">2.7.7.3</ecNumber>
    </recommendedName>
    <alternativeName>
        <fullName evidence="1">Dephospho-CoA pyrophosphorylase</fullName>
    </alternativeName>
    <alternativeName>
        <fullName evidence="1">Pantetheine-phosphate adenylyltransferase</fullName>
        <shortName evidence="1">PPAT</shortName>
    </alternativeName>
</protein>